<organism>
    <name type="scientific">Planktothrix agardhii</name>
    <name type="common">Oscillatoria agardhii</name>
    <dbReference type="NCBI Taxonomy" id="1160"/>
    <lineage>
        <taxon>Bacteria</taxon>
        <taxon>Bacillati</taxon>
        <taxon>Cyanobacteriota</taxon>
        <taxon>Cyanophyceae</taxon>
        <taxon>Oscillatoriophycideae</taxon>
        <taxon>Oscillatoriales</taxon>
        <taxon>Microcoleaceae</taxon>
        <taxon>Planktothrix</taxon>
    </lineage>
</organism>
<accession>P0A3G0</accession>
<accession>P80996</accession>
<accession>Q8GBY8</accession>
<accession>Q9R3V0</accession>
<name>GVPA_PLAAG</name>
<keyword id="KW-0903">Direct protein sequencing</keyword>
<keyword id="KW-0304">Gas vesicle</keyword>
<feature type="initiator methionine" description="Removed" evidence="2">
    <location>
        <position position="1"/>
    </location>
</feature>
<feature type="chain" id="PRO_0000199986" description="Gas vesicle protein A">
    <location>
        <begin position="2"/>
        <end position="72"/>
    </location>
</feature>
<feature type="sequence conflict" description="In Ref. 2; AA sequence." evidence="5" ref="2">
    <original>A</original>
    <variation>D</variation>
    <location>
        <position position="60"/>
    </location>
</feature>
<reference key="1">
    <citation type="journal article" date="2000" name="Microbiology">
        <title>Gas vesicle genes in Planktothrix spp. from Nordic lakes: strains with weak gas vesicles possess a longer variant of gvpC.</title>
        <authorList>
            <person name="Beard S.J."/>
            <person name="Davis P.A."/>
            <person name="Iglesias-Rodriguez D."/>
            <person name="Skulberg O.M."/>
            <person name="Walsby A.E."/>
        </authorList>
    </citation>
    <scope>NUCLEOTIDE SEQUENCE [GENOMIC DNA]</scope>
    <source>
        <strain>CYA 137</strain>
        <strain>CYA 29</strain>
    </source>
</reference>
<reference key="2">
    <citation type="journal article" date="1992" name="J. Gen. Microbiol.">
        <title>The homologies of gas vesicle proteins.</title>
        <authorList>
            <person name="Griffiths A.E."/>
            <person name="Walsby A.E."/>
            <person name="Hayes P.K."/>
        </authorList>
    </citation>
    <scope>PROTEIN SEQUENCE OF 2-63</scope>
    <scope>SUBCELLULAR LOCATION</scope>
    <source>
        <strain>CYA 29</strain>
    </source>
</reference>
<reference evidence="6" key="3">
    <citation type="journal article" date="2002" name="FEMS Microbiol. Lett.">
        <title>Spontaneous mutations in gas vesicle genes of Planktothrix spp. affect gas vesicle production and critical pressure.</title>
        <authorList>
            <person name="Beard S.J."/>
            <person name="Handley B.A."/>
            <person name="Walsby A.E."/>
        </authorList>
    </citation>
    <scope>NUCLEOTIDE SEQUENCE [GENOMIC DNA] OF 61-72</scope>
    <source>
        <strain evidence="6">CYA 29</strain>
    </source>
</reference>
<evidence type="ECO:0000255" key="1">
    <source>
        <dbReference type="HAMAP-Rule" id="MF_00576"/>
    </source>
</evidence>
<evidence type="ECO:0000269" key="2">
    <source>
    </source>
</evidence>
<evidence type="ECO:0000303" key="3">
    <source>
    </source>
</evidence>
<evidence type="ECO:0000303" key="4">
    <source>
    </source>
</evidence>
<evidence type="ECO:0000305" key="5"/>
<evidence type="ECO:0000312" key="6">
    <source>
        <dbReference type="EMBL" id="CAD41965.1"/>
    </source>
</evidence>
<comment type="function">
    <text evidence="1">Gas vesicles are hollow, gas filled proteinaceous nanostructures found in some microorganisms. During planktonic growth they allow positioning of the organism at a favorable depth for light or nutrient acquisition. GvpA forms the protein shell.</text>
</comment>
<comment type="subunit">
    <text evidence="1">The gas vesicle shell is 2 nm thick and consists of a single layer of this protein. It forms helical ribs nearly perpendicular to the long axis of the vesicle.</text>
</comment>
<comment type="subcellular location">
    <subcellularLocation>
        <location evidence="1 2">Gas vesicle shell</location>
    </subcellularLocation>
</comment>
<comment type="similarity">
    <text evidence="1">Belongs to the gas vesicle GvpA family.</text>
</comment>
<dbReference type="EMBL" id="AJ253130">
    <property type="protein sequence ID" value="CAB59517.1"/>
    <property type="molecule type" value="Genomic_DNA"/>
</dbReference>
<dbReference type="EMBL" id="AJ253133">
    <property type="protein sequence ID" value="CAB59523.1"/>
    <property type="molecule type" value="Genomic_DNA"/>
</dbReference>
<dbReference type="EMBL" id="AJ494992">
    <property type="protein sequence ID" value="CAD41965.1"/>
    <property type="molecule type" value="Genomic_DNA"/>
</dbReference>
<dbReference type="RefSeq" id="WP_026789190.1">
    <property type="nucleotide sequence ID" value="NZ_LR882969.1"/>
</dbReference>
<dbReference type="SMR" id="P0A3G0"/>
<dbReference type="GeneID" id="77287376"/>
<dbReference type="GO" id="GO:0033172">
    <property type="term" value="C:gas vesicle shell"/>
    <property type="evidence" value="ECO:0007669"/>
    <property type="project" value="UniProtKB-UniRule"/>
</dbReference>
<dbReference type="GO" id="GO:0012506">
    <property type="term" value="C:vesicle membrane"/>
    <property type="evidence" value="ECO:0007669"/>
    <property type="project" value="InterPro"/>
</dbReference>
<dbReference type="GO" id="GO:0005198">
    <property type="term" value="F:structural molecule activity"/>
    <property type="evidence" value="ECO:0007669"/>
    <property type="project" value="InterPro"/>
</dbReference>
<dbReference type="HAMAP" id="MF_00576">
    <property type="entry name" value="Gas_vesicle_A"/>
    <property type="match status" value="1"/>
</dbReference>
<dbReference type="InterPro" id="IPR000638">
    <property type="entry name" value="Gas-vesicle_GvpA-like"/>
</dbReference>
<dbReference type="InterPro" id="IPR047870">
    <property type="entry name" value="Gas_vesicle_GvpA"/>
</dbReference>
<dbReference type="InterPro" id="IPR050530">
    <property type="entry name" value="GvpA"/>
</dbReference>
<dbReference type="InterPro" id="IPR018493">
    <property type="entry name" value="GvpA-like_CS"/>
</dbReference>
<dbReference type="NCBIfam" id="NF006874">
    <property type="entry name" value="PRK09371.1"/>
    <property type="match status" value="1"/>
</dbReference>
<dbReference type="PANTHER" id="PTHR35344:SF4">
    <property type="entry name" value="GAS VESICLE PROTEIN A1"/>
    <property type="match status" value="1"/>
</dbReference>
<dbReference type="PANTHER" id="PTHR35344">
    <property type="entry name" value="GAS VESICLE STRUCTURAL PROTEIN 2-RELATED"/>
    <property type="match status" value="1"/>
</dbReference>
<dbReference type="Pfam" id="PF00741">
    <property type="entry name" value="Gas_vesicle"/>
    <property type="match status" value="1"/>
</dbReference>
<dbReference type="PROSITE" id="PS00234">
    <property type="entry name" value="GAS_VESICLE_A_1"/>
    <property type="match status" value="1"/>
</dbReference>
<dbReference type="PROSITE" id="PS00669">
    <property type="entry name" value="GAS_VESICLE_A_2"/>
    <property type="match status" value="1"/>
</dbReference>
<protein>
    <recommendedName>
        <fullName evidence="1">Gas vesicle protein A</fullName>
        <shortName evidence="1 4">GvpA</shortName>
    </recommendedName>
    <alternativeName>
        <fullName evidence="4">Gas vesicle structural protein</fullName>
    </alternativeName>
</protein>
<proteinExistence type="evidence at protein level"/>
<sequence length="72" mass="7642">MAVEKVNSSSSLAEVIDRILDKGIVIDAWVRVSLVGIELLSIEARIVIASVETYLKYAEAVGLTAQAAVPSV</sequence>
<gene>
    <name evidence="1 3" type="primary">gvpA</name>
</gene>